<name>PCRB_LISIN</name>
<organism>
    <name type="scientific">Listeria innocua serovar 6a (strain ATCC BAA-680 / CLIP 11262)</name>
    <dbReference type="NCBI Taxonomy" id="272626"/>
    <lineage>
        <taxon>Bacteria</taxon>
        <taxon>Bacillati</taxon>
        <taxon>Bacillota</taxon>
        <taxon>Bacilli</taxon>
        <taxon>Bacillales</taxon>
        <taxon>Listeriaceae</taxon>
        <taxon>Listeria</taxon>
    </lineage>
</organism>
<comment type="function">
    <text evidence="1">Prenyltransferase that catalyzes in vivo the transfer of the heptaprenyl moiety of heptaprenyl pyrophosphate (HepPP; 35 carbon atoms) to the C3 hydroxyl of sn-glycerol-1-phosphate (G1P), producing heptaprenylglyceryl phosphate (HepGP). This reaction is an ether-bond-formation step in the biosynthesis of archaea-type G1P-based membrane lipids found in Bacillales.</text>
</comment>
<comment type="catalytic activity">
    <reaction evidence="1">
        <text>sn-glycerol 1-phosphate + all-trans-heptaprenyl diphosphate = 3-heptaprenyl-sn-glycero-1-phosphate + diphosphate</text>
        <dbReference type="Rhea" id="RHEA:33495"/>
        <dbReference type="ChEBI" id="CHEBI:33019"/>
        <dbReference type="ChEBI" id="CHEBI:57685"/>
        <dbReference type="ChEBI" id="CHEBI:58206"/>
        <dbReference type="ChEBI" id="CHEBI:64781"/>
        <dbReference type="EC" id="2.5.1.n9"/>
    </reaction>
</comment>
<comment type="cofactor">
    <cofactor evidence="1">
        <name>Mg(2+)</name>
        <dbReference type="ChEBI" id="CHEBI:18420"/>
    </cofactor>
</comment>
<comment type="pathway">
    <text evidence="1">Membrane lipid metabolism; glycerophospholipid metabolism.</text>
</comment>
<comment type="subunit">
    <text evidence="1">Homodimer.</text>
</comment>
<comment type="similarity">
    <text evidence="1">Belongs to the GGGP/HepGP synthase family. Group I subfamily.</text>
</comment>
<reference key="1">
    <citation type="journal article" date="2001" name="Science">
        <title>Comparative genomics of Listeria species.</title>
        <authorList>
            <person name="Glaser P."/>
            <person name="Frangeul L."/>
            <person name="Buchrieser C."/>
            <person name="Rusniok C."/>
            <person name="Amend A."/>
            <person name="Baquero F."/>
            <person name="Berche P."/>
            <person name="Bloecker H."/>
            <person name="Brandt P."/>
            <person name="Chakraborty T."/>
            <person name="Charbit A."/>
            <person name="Chetouani F."/>
            <person name="Couve E."/>
            <person name="de Daruvar A."/>
            <person name="Dehoux P."/>
            <person name="Domann E."/>
            <person name="Dominguez-Bernal G."/>
            <person name="Duchaud E."/>
            <person name="Durant L."/>
            <person name="Dussurget O."/>
            <person name="Entian K.-D."/>
            <person name="Fsihi H."/>
            <person name="Garcia-del Portillo F."/>
            <person name="Garrido P."/>
            <person name="Gautier L."/>
            <person name="Goebel W."/>
            <person name="Gomez-Lopez N."/>
            <person name="Hain T."/>
            <person name="Hauf J."/>
            <person name="Jackson D."/>
            <person name="Jones L.-M."/>
            <person name="Kaerst U."/>
            <person name="Kreft J."/>
            <person name="Kuhn M."/>
            <person name="Kunst F."/>
            <person name="Kurapkat G."/>
            <person name="Madueno E."/>
            <person name="Maitournam A."/>
            <person name="Mata Vicente J."/>
            <person name="Ng E."/>
            <person name="Nedjari H."/>
            <person name="Nordsiek G."/>
            <person name="Novella S."/>
            <person name="de Pablos B."/>
            <person name="Perez-Diaz J.-C."/>
            <person name="Purcell R."/>
            <person name="Remmel B."/>
            <person name="Rose M."/>
            <person name="Schlueter T."/>
            <person name="Simoes N."/>
            <person name="Tierrez A."/>
            <person name="Vazquez-Boland J.-A."/>
            <person name="Voss H."/>
            <person name="Wehland J."/>
            <person name="Cossart P."/>
        </authorList>
    </citation>
    <scope>NUCLEOTIDE SEQUENCE [LARGE SCALE GENOMIC DNA]</scope>
    <source>
        <strain>ATCC BAA-680 / CLIP 11262</strain>
    </source>
</reference>
<keyword id="KW-0444">Lipid biosynthesis</keyword>
<keyword id="KW-0443">Lipid metabolism</keyword>
<keyword id="KW-0460">Magnesium</keyword>
<keyword id="KW-0479">Metal-binding</keyword>
<keyword id="KW-0594">Phospholipid biosynthesis</keyword>
<keyword id="KW-1208">Phospholipid metabolism</keyword>
<keyword id="KW-0808">Transferase</keyword>
<proteinExistence type="inferred from homology"/>
<sequence>MKHLFKLDPAKNLPRNSVTKLIHSGTDGFIIGGTDNLEIEAVENLYELLAETDLPIFLEVSDESMILPEAEHFLIPVVLNTENSKWTHGLHKELIKELGDFIPWKRITSEGYVILNKDAKVAQLTEAKTDLTDEDIIAYARLAENIFRLPIFYVEYSGMYGDPEAVRKVSEVLSDTEFWYGGGIRSKEQAAEMAKYADTIIVGNIIYEDLEKALETATIFRKKTV</sequence>
<accession>Q92AP8</accession>
<feature type="chain" id="PRO_0000138713" description="Heptaprenylglyceryl phosphate synthase">
    <location>
        <begin position="1"/>
        <end position="225"/>
    </location>
</feature>
<feature type="binding site" evidence="1">
    <location>
        <position position="6"/>
    </location>
    <ligand>
        <name>sn-glycerol 1-phosphate</name>
        <dbReference type="ChEBI" id="CHEBI:57685"/>
    </ligand>
</feature>
<feature type="binding site" evidence="1">
    <location>
        <position position="8"/>
    </location>
    <ligand>
        <name>Mg(2+)</name>
        <dbReference type="ChEBI" id="CHEBI:18420"/>
    </ligand>
</feature>
<feature type="binding site" evidence="1">
    <location>
        <position position="34"/>
    </location>
    <ligand>
        <name>Mg(2+)</name>
        <dbReference type="ChEBI" id="CHEBI:18420"/>
    </ligand>
</feature>
<feature type="binding site" evidence="1">
    <location>
        <begin position="153"/>
        <end position="158"/>
    </location>
    <ligand>
        <name>sn-glycerol 1-phosphate</name>
        <dbReference type="ChEBI" id="CHEBI:57685"/>
    </ligand>
</feature>
<feature type="binding site" evidence="1">
    <location>
        <position position="183"/>
    </location>
    <ligand>
        <name>sn-glycerol 1-phosphate</name>
        <dbReference type="ChEBI" id="CHEBI:57685"/>
    </ligand>
</feature>
<feature type="binding site" evidence="1">
    <location>
        <begin position="203"/>
        <end position="204"/>
    </location>
    <ligand>
        <name>sn-glycerol 1-phosphate</name>
        <dbReference type="ChEBI" id="CHEBI:57685"/>
    </ligand>
</feature>
<gene>
    <name evidence="1" type="primary">pcrB</name>
    <name type="ordered locus">lin1872</name>
</gene>
<dbReference type="EC" id="2.5.1.n9" evidence="1"/>
<dbReference type="EMBL" id="AL596170">
    <property type="protein sequence ID" value="CAC97102.1"/>
    <property type="molecule type" value="Genomic_DNA"/>
</dbReference>
<dbReference type="PIR" id="AF1666">
    <property type="entry name" value="AF1666"/>
</dbReference>
<dbReference type="RefSeq" id="WP_003762841.1">
    <property type="nucleotide sequence ID" value="NC_003212.1"/>
</dbReference>
<dbReference type="SMR" id="Q92AP8"/>
<dbReference type="STRING" id="272626.gene:17566227"/>
<dbReference type="KEGG" id="lin:lin1872"/>
<dbReference type="eggNOG" id="COG1646">
    <property type="taxonomic scope" value="Bacteria"/>
</dbReference>
<dbReference type="HOGENOM" id="CLU_095211_0_0_9"/>
<dbReference type="OrthoDB" id="2381757at2"/>
<dbReference type="UniPathway" id="UPA00940"/>
<dbReference type="Proteomes" id="UP000002513">
    <property type="component" value="Chromosome"/>
</dbReference>
<dbReference type="GO" id="GO:0120536">
    <property type="term" value="F:heptaprenylglyceryl phosphate synthase activity"/>
    <property type="evidence" value="ECO:0007669"/>
    <property type="project" value="RHEA"/>
</dbReference>
<dbReference type="GO" id="GO:0000287">
    <property type="term" value="F:magnesium ion binding"/>
    <property type="evidence" value="ECO:0007669"/>
    <property type="project" value="UniProtKB-UniRule"/>
</dbReference>
<dbReference type="GO" id="GO:0046474">
    <property type="term" value="P:glycerophospholipid biosynthetic process"/>
    <property type="evidence" value="ECO:0007669"/>
    <property type="project" value="UniProtKB-UniRule"/>
</dbReference>
<dbReference type="CDD" id="cd02812">
    <property type="entry name" value="PcrB_like"/>
    <property type="match status" value="1"/>
</dbReference>
<dbReference type="FunFam" id="3.20.20.390:FF:000001">
    <property type="entry name" value="Heptaprenylglyceryl phosphate synthase"/>
    <property type="match status" value="1"/>
</dbReference>
<dbReference type="Gene3D" id="3.20.20.390">
    <property type="entry name" value="FMN-linked oxidoreductases"/>
    <property type="match status" value="1"/>
</dbReference>
<dbReference type="HAMAP" id="MF_00112">
    <property type="entry name" value="GGGP_HepGP_synthase"/>
    <property type="match status" value="1"/>
</dbReference>
<dbReference type="InterPro" id="IPR039074">
    <property type="entry name" value="GGGP/HepGP_synthase_I"/>
</dbReference>
<dbReference type="InterPro" id="IPR038597">
    <property type="entry name" value="GGGP/HepGP_synthase_sf"/>
</dbReference>
<dbReference type="InterPro" id="IPR008205">
    <property type="entry name" value="GGGP_HepGP_synthase"/>
</dbReference>
<dbReference type="NCBIfam" id="TIGR01768">
    <property type="entry name" value="GGGP-family"/>
    <property type="match status" value="1"/>
</dbReference>
<dbReference type="NCBIfam" id="NF003199">
    <property type="entry name" value="PRK04169.1-3"/>
    <property type="match status" value="1"/>
</dbReference>
<dbReference type="PANTHER" id="PTHR40029">
    <property type="match status" value="1"/>
</dbReference>
<dbReference type="PANTHER" id="PTHR40029:SF2">
    <property type="entry name" value="HEPTAPRENYLGLYCERYL PHOSPHATE SYNTHASE"/>
    <property type="match status" value="1"/>
</dbReference>
<dbReference type="Pfam" id="PF01884">
    <property type="entry name" value="PcrB"/>
    <property type="match status" value="1"/>
</dbReference>
<dbReference type="SUPFAM" id="SSF51395">
    <property type="entry name" value="FMN-linked oxidoreductases"/>
    <property type="match status" value="1"/>
</dbReference>
<evidence type="ECO:0000255" key="1">
    <source>
        <dbReference type="HAMAP-Rule" id="MF_00112"/>
    </source>
</evidence>
<protein>
    <recommendedName>
        <fullName evidence="1">Heptaprenylglyceryl phosphate synthase</fullName>
        <shortName evidence="1">HepGP synthase</shortName>
        <ecNumber evidence="1">2.5.1.n9</ecNumber>
    </recommendedName>
    <alternativeName>
        <fullName evidence="1">Glycerol-1-phosphate heptaprenyltransferase</fullName>
    </alternativeName>
</protein>